<accession>E1BMV3</accession>
<evidence type="ECO:0000250" key="1">
    <source>
        <dbReference type="UniProtKB" id="P05099"/>
    </source>
</evidence>
<evidence type="ECO:0000250" key="2">
    <source>
        <dbReference type="UniProtKB" id="P21941"/>
    </source>
</evidence>
<evidence type="ECO:0000250" key="3">
    <source>
        <dbReference type="UniProtKB" id="P51942"/>
    </source>
</evidence>
<evidence type="ECO:0000255" key="4"/>
<evidence type="ECO:0000255" key="5">
    <source>
        <dbReference type="PROSITE-ProRule" id="PRU00076"/>
    </source>
</evidence>
<evidence type="ECO:0000255" key="6">
    <source>
        <dbReference type="PROSITE-ProRule" id="PRU00219"/>
    </source>
</evidence>
<evidence type="ECO:0000269" key="7">
    <source>
    </source>
</evidence>
<evidence type="ECO:0000305" key="8"/>
<evidence type="ECO:0000312" key="9">
    <source>
        <dbReference type="Proteomes" id="UP000009136"/>
    </source>
</evidence>
<evidence type="ECO:0000312" key="10">
    <source>
        <dbReference type="VGNC" id="VGNC:31264"/>
    </source>
</evidence>
<gene>
    <name evidence="10" type="primary">MATN1</name>
    <name evidence="3" type="synonym">CMP</name>
</gene>
<dbReference type="RefSeq" id="XP_059749074.1">
    <property type="nucleotide sequence ID" value="XM_059893091.1"/>
</dbReference>
<dbReference type="ComplexPortal" id="CPX-4521">
    <property type="entry name" value="Matrilin-1 complex"/>
</dbReference>
<dbReference type="ComplexPortal" id="CPX-4523">
    <property type="entry name" value="Matrilin-1 - Matrilin-3 complex"/>
</dbReference>
<dbReference type="FunCoup" id="E1BMV3">
    <property type="interactions" value="63"/>
</dbReference>
<dbReference type="IntAct" id="E1BMV3">
    <property type="interactions" value="1"/>
</dbReference>
<dbReference type="STRING" id="9913.ENSBTAP00000040771"/>
<dbReference type="PaxDb" id="9913-ENSBTAP00000040771"/>
<dbReference type="Ensembl" id="ENSBTAT00000043181.5">
    <property type="protein sequence ID" value="ENSBTAP00000040771.5"/>
    <property type="gene ID" value="ENSBTAG00000003479.7"/>
</dbReference>
<dbReference type="GeneID" id="512059"/>
<dbReference type="VEuPathDB" id="HostDB:ENSBTAG00000003479"/>
<dbReference type="VGNC" id="VGNC:31264">
    <property type="gene designation" value="MATN1"/>
</dbReference>
<dbReference type="eggNOG" id="KOG1217">
    <property type="taxonomic scope" value="Eukaryota"/>
</dbReference>
<dbReference type="GeneTree" id="ENSGT00940000159638"/>
<dbReference type="HOGENOM" id="CLU_008905_7_0_1"/>
<dbReference type="InParanoid" id="E1BMV3"/>
<dbReference type="OrthoDB" id="6022609at2759"/>
<dbReference type="TreeFam" id="TF330078"/>
<dbReference type="Reactome" id="R-BTA-3000178">
    <property type="pathway name" value="ECM proteoglycans"/>
</dbReference>
<dbReference type="Proteomes" id="UP000009136">
    <property type="component" value="Chromosome 2"/>
</dbReference>
<dbReference type="Bgee" id="ENSBTAG00000003479">
    <property type="expression patterns" value="Expressed in laryngeal cartilage and 29 other cell types or tissues"/>
</dbReference>
<dbReference type="GO" id="GO:0062023">
    <property type="term" value="C:collagen-containing extracellular matrix"/>
    <property type="evidence" value="ECO:0000318"/>
    <property type="project" value="GO_Central"/>
</dbReference>
<dbReference type="GO" id="GO:0005576">
    <property type="term" value="C:extracellular region"/>
    <property type="evidence" value="ECO:0007669"/>
    <property type="project" value="UniProtKB-SubCell"/>
</dbReference>
<dbReference type="GO" id="GO:0120216">
    <property type="term" value="C:matrilin complex"/>
    <property type="evidence" value="ECO:0000353"/>
    <property type="project" value="ComplexPortal"/>
</dbReference>
<dbReference type="GO" id="GO:0005509">
    <property type="term" value="F:calcium ion binding"/>
    <property type="evidence" value="ECO:0007669"/>
    <property type="project" value="InterPro"/>
</dbReference>
<dbReference type="GO" id="GO:0030198">
    <property type="term" value="P:extracellular matrix organization"/>
    <property type="evidence" value="ECO:0000303"/>
    <property type="project" value="ComplexPortal"/>
</dbReference>
<dbReference type="GO" id="GO:0003429">
    <property type="term" value="P:growth plate cartilage chondrocyte morphogenesis"/>
    <property type="evidence" value="ECO:0007669"/>
    <property type="project" value="Ensembl"/>
</dbReference>
<dbReference type="GO" id="GO:0030500">
    <property type="term" value="P:regulation of bone mineralization"/>
    <property type="evidence" value="ECO:0007669"/>
    <property type="project" value="Ensembl"/>
</dbReference>
<dbReference type="CDD" id="cd01475">
    <property type="entry name" value="vWA_Matrilin"/>
    <property type="match status" value="1"/>
</dbReference>
<dbReference type="FunFam" id="2.10.25.10:FF:000600">
    <property type="entry name" value="cartilage matrix protein-like"/>
    <property type="match status" value="1"/>
</dbReference>
<dbReference type="FunFam" id="3.40.50.410:FF:000004">
    <property type="entry name" value="collagen alpha-6(VI) chain"/>
    <property type="match status" value="1"/>
</dbReference>
<dbReference type="FunFam" id="3.40.50.410:FF:000018">
    <property type="entry name" value="Matrilin 1"/>
    <property type="match status" value="1"/>
</dbReference>
<dbReference type="Gene3D" id="2.10.25.10">
    <property type="entry name" value="Laminin"/>
    <property type="match status" value="1"/>
</dbReference>
<dbReference type="Gene3D" id="3.40.50.410">
    <property type="entry name" value="von Willebrand factor, type A domain"/>
    <property type="match status" value="2"/>
</dbReference>
<dbReference type="InterPro" id="IPR050525">
    <property type="entry name" value="ECM_Assembly_Org"/>
</dbReference>
<dbReference type="InterPro" id="IPR001881">
    <property type="entry name" value="EGF-like_Ca-bd_dom"/>
</dbReference>
<dbReference type="InterPro" id="IPR000742">
    <property type="entry name" value="EGF-like_dom"/>
</dbReference>
<dbReference type="InterPro" id="IPR036337">
    <property type="entry name" value="Matrilin_cc_sf"/>
</dbReference>
<dbReference type="InterPro" id="IPR019466">
    <property type="entry name" value="Matrilin_coiled-coil_trimer"/>
</dbReference>
<dbReference type="InterPro" id="IPR002035">
    <property type="entry name" value="VWF_A"/>
</dbReference>
<dbReference type="InterPro" id="IPR036465">
    <property type="entry name" value="vWFA_dom_sf"/>
</dbReference>
<dbReference type="PANTHER" id="PTHR24020:SF16">
    <property type="entry name" value="CARTILAGE MATRIX PROTEIN"/>
    <property type="match status" value="1"/>
</dbReference>
<dbReference type="PANTHER" id="PTHR24020">
    <property type="entry name" value="COLLAGEN ALPHA"/>
    <property type="match status" value="1"/>
</dbReference>
<dbReference type="Pfam" id="PF14670">
    <property type="entry name" value="FXa_inhibition"/>
    <property type="match status" value="1"/>
</dbReference>
<dbReference type="Pfam" id="PF10393">
    <property type="entry name" value="Matrilin_ccoil"/>
    <property type="match status" value="1"/>
</dbReference>
<dbReference type="Pfam" id="PF00092">
    <property type="entry name" value="VWA"/>
    <property type="match status" value="2"/>
</dbReference>
<dbReference type="PRINTS" id="PR00453">
    <property type="entry name" value="VWFADOMAIN"/>
</dbReference>
<dbReference type="SMART" id="SM00181">
    <property type="entry name" value="EGF"/>
    <property type="match status" value="1"/>
</dbReference>
<dbReference type="SMART" id="SM00179">
    <property type="entry name" value="EGF_CA"/>
    <property type="match status" value="1"/>
</dbReference>
<dbReference type="SMART" id="SM01279">
    <property type="entry name" value="Matrilin_ccoil"/>
    <property type="match status" value="1"/>
</dbReference>
<dbReference type="SMART" id="SM00327">
    <property type="entry name" value="VWA"/>
    <property type="match status" value="2"/>
</dbReference>
<dbReference type="SUPFAM" id="SSF58002">
    <property type="entry name" value="Chicken cartilage matrix protein"/>
    <property type="match status" value="1"/>
</dbReference>
<dbReference type="SUPFAM" id="SSF53300">
    <property type="entry name" value="vWA-like"/>
    <property type="match status" value="2"/>
</dbReference>
<dbReference type="PROSITE" id="PS01186">
    <property type="entry name" value="EGF_2"/>
    <property type="match status" value="1"/>
</dbReference>
<dbReference type="PROSITE" id="PS50234">
    <property type="entry name" value="VWFA"/>
    <property type="match status" value="2"/>
</dbReference>
<organism evidence="9">
    <name type="scientific">Bos taurus</name>
    <name type="common">Bovine</name>
    <dbReference type="NCBI Taxonomy" id="9913"/>
    <lineage>
        <taxon>Eukaryota</taxon>
        <taxon>Metazoa</taxon>
        <taxon>Chordata</taxon>
        <taxon>Craniata</taxon>
        <taxon>Vertebrata</taxon>
        <taxon>Euteleostomi</taxon>
        <taxon>Mammalia</taxon>
        <taxon>Eutheria</taxon>
        <taxon>Laurasiatheria</taxon>
        <taxon>Artiodactyla</taxon>
        <taxon>Ruminantia</taxon>
        <taxon>Pecora</taxon>
        <taxon>Bovidae</taxon>
        <taxon>Bovinae</taxon>
        <taxon>Bos</taxon>
    </lineage>
</organism>
<comment type="function">
    <text evidence="1 3">A major component of the extracellular matrix of non-articular cartilage (By similarity). Binds to type 2 collagens and forms long concatenated protein networks as part of the extracellular matrix (By similarity). Required for the network-like organization and bundling of collagen fibrils surrounding chondrocytes in the zones of maturation and hypertrophy (By similarity). Required for mechanotransduction and adaption to mechanical loading in cartilage chondrocytes, resulting in an increase in expression of the extracellular matrix components ACAN and COL2A1 (By similarity). Acts as a moderator of angiogenesis in response to injury (By similarity).</text>
</comment>
<comment type="subunit">
    <text evidence="1 2 7">Homotrimer (By similarity). Part of a complex composed of MATN1 (via VWFA1 domain), type 2 collagens and type 6 collagens (By similarity). Forms a complex (via covalent bonds) with ACAN; the interaction increases in abundance with increasing age of the organism via an increase in occupancy of MATN1 binding sites (PubMed:8943283). Interacts with COMP (By similarity).</text>
</comment>
<comment type="subcellular location">
    <subcellularLocation>
        <location evidence="1">Secreted</location>
        <location evidence="1">Extracellular space</location>
        <location evidence="1">Extracellular matrix</location>
    </subcellularLocation>
</comment>
<comment type="tissue specificity">
    <text evidence="7">Expressed in trachea from fetus into adulthood (at protein level).</text>
</comment>
<comment type="PTM">
    <text evidence="2">N-glycosylated; reduces binding affinity for type 2 collagens.</text>
</comment>
<protein>
    <recommendedName>
        <fullName evidence="3">Matrilin-1</fullName>
    </recommendedName>
    <alternativeName>
        <fullName evidence="3">Cartilage matrix protein</fullName>
    </alternativeName>
</protein>
<keyword id="KW-1015">Disulfide bond</keyword>
<keyword id="KW-0245">EGF-like domain</keyword>
<keyword id="KW-0272">Extracellular matrix</keyword>
<keyword id="KW-0325">Glycoprotein</keyword>
<keyword id="KW-1185">Reference proteome</keyword>
<keyword id="KW-0677">Repeat</keyword>
<keyword id="KW-0964">Secreted</keyword>
<keyword id="KW-0732">Signal</keyword>
<name>MATN1_BOVIN</name>
<proteinExistence type="evidence at protein level"/>
<sequence length="544" mass="59014">MRALSGPRLMLCGLLLLLFQAPCALGLAPLSRGHLCRTRPTDLVFVVDSSRSVRPVEFEKVKVFLSQVIESLDVGPNATRVGLVNYASSVKQEFPLRAHSSKAELLQAVRRIQPLSTGTMTGLAIQFAITKALSDAEGGRPRSPDISKVVIVVTDGRPQDSVRDVSARARAGGIELFAIGVGRVDKATLQQIASEPQDEHVDYVESYSVIEKLSKKFQEAFCLVSDLCATGDHDCEQVCVSSPGSYTCACREGFTLNSDGKTCNVCNGGGGSSATDLVFLIDGSKSVRPENFELVKKFINQIVDTLDVSDKLAQVGLVQYSSSVRQEFPLGRFHTKKDIKAAVRNMSYMEKGTMTGAALKYLIDNSFTVSSGARPGAQKVGIVFTDGRSQDYINDAAKKAKDLGFKMFAVGVGNAVEDELREIASEPVAEHYFYTADFKTINQIGKKLQKRICVEEDPCACESIVKFQTKVEGLLQALTRKHILSQKPLRGEGAVRRALWWRGGESLAPCVVGSGRLLLKTGWILAREAGLGFGTEKGEAETKS</sequence>
<reference evidence="9" key="1">
    <citation type="submission" date="2018-03" db="EMBL/GenBank/DDBJ databases">
        <title>ARS-UCD1.2.</title>
        <authorList>
            <person name="Rosen B.D."/>
            <person name="Bickhart D.M."/>
            <person name="Koren S."/>
            <person name="Schnabel R.D."/>
            <person name="Hall R."/>
            <person name="Zimin A."/>
            <person name="Dreischer C."/>
            <person name="Schultheiss S."/>
            <person name="Schroeder S.G."/>
            <person name="Elsik C.G."/>
            <person name="Couldrey C."/>
            <person name="Liu G.E."/>
            <person name="Van Tassell C.P."/>
            <person name="Phillippy A.M."/>
            <person name="Smith T.P.L."/>
            <person name="Medrano J.F."/>
        </authorList>
    </citation>
    <scope>NUCLEOTIDE SEQUENCE [LARGE SCALE GENOMIC DNA]</scope>
    <source>
        <strain evidence="9">Hereford</strain>
    </source>
</reference>
<reference evidence="8" key="2">
    <citation type="journal article" date="1996" name="J. Biol. Chem.">
        <title>Interaction of cartilage matrix protein with aggrecan. Increased covalent cross-linking with tissue maturation.</title>
        <authorList>
            <person name="Hauser N."/>
            <person name="Paulsson M."/>
            <person name="Heinegard D."/>
            <person name="Moergelin M."/>
        </authorList>
    </citation>
    <scope>INTERACTION WITH ACAN</scope>
    <scope>TISSUE SPECIFICITY</scope>
</reference>
<feature type="signal peptide" evidence="4">
    <location>
        <begin position="1"/>
        <end position="26"/>
    </location>
</feature>
<feature type="chain" id="PRO_5042113661" description="Matrilin-1" evidence="4">
    <location>
        <begin position="27"/>
        <end position="544"/>
    </location>
</feature>
<feature type="domain" description="VWFA 1" evidence="6">
    <location>
        <begin position="42"/>
        <end position="217"/>
    </location>
</feature>
<feature type="domain" description="EGF-like" evidence="5">
    <location>
        <begin position="224"/>
        <end position="264"/>
    </location>
</feature>
<feature type="domain" description="VWFA 2" evidence="6">
    <location>
        <begin position="276"/>
        <end position="448"/>
    </location>
</feature>
<feature type="glycosylation site" description="N-linked (GlcNAc...) asparagine" evidence="4">
    <location>
        <position position="77"/>
    </location>
</feature>
<feature type="glycosylation site" description="N-linked (GlcNAc...) asparagine" evidence="4">
    <location>
        <position position="345"/>
    </location>
</feature>
<feature type="disulfide bond" evidence="3">
    <location>
        <begin position="228"/>
        <end position="239"/>
    </location>
</feature>
<feature type="disulfide bond" evidence="3">
    <location>
        <begin position="235"/>
        <end position="248"/>
    </location>
</feature>
<feature type="disulfide bond" evidence="3">
    <location>
        <begin position="250"/>
        <end position="263"/>
    </location>
</feature>